<evidence type="ECO:0000255" key="1"/>
<evidence type="ECO:0000256" key="2">
    <source>
        <dbReference type="SAM" id="MobiDB-lite"/>
    </source>
</evidence>
<evidence type="ECO:0000269" key="3">
    <source>
    </source>
</evidence>
<evidence type="ECO:0000269" key="4">
    <source>
    </source>
</evidence>
<evidence type="ECO:0000269" key="5">
    <source>
    </source>
</evidence>
<evidence type="ECO:0000269" key="6">
    <source>
    </source>
</evidence>
<evidence type="ECO:0000269" key="7">
    <source>
    </source>
</evidence>
<evidence type="ECO:0000269" key="8">
    <source>
    </source>
</evidence>
<evidence type="ECO:0000269" key="9">
    <source>
    </source>
</evidence>
<evidence type="ECO:0000269" key="10">
    <source>
    </source>
</evidence>
<evidence type="ECO:0000269" key="11">
    <source>
    </source>
</evidence>
<evidence type="ECO:0000269" key="12">
    <source>
    </source>
</evidence>
<evidence type="ECO:0000269" key="13">
    <source>
    </source>
</evidence>
<evidence type="ECO:0000269" key="14">
    <source>
    </source>
</evidence>
<evidence type="ECO:0000269" key="15">
    <source>
    </source>
</evidence>
<evidence type="ECO:0000269" key="16">
    <source>
    </source>
</evidence>
<evidence type="ECO:0000303" key="17">
    <source>
    </source>
</evidence>
<evidence type="ECO:0000303" key="18">
    <source>
    </source>
</evidence>
<evidence type="ECO:0000305" key="19"/>
<evidence type="ECO:0007744" key="20">
    <source>
    </source>
</evidence>
<evidence type="ECO:0007744" key="21">
    <source>
    </source>
</evidence>
<evidence type="ECO:0007829" key="22">
    <source>
        <dbReference type="PDB" id="7XE4"/>
    </source>
</evidence>
<evidence type="ECO:0007829" key="23">
    <source>
        <dbReference type="PDB" id="7YUY"/>
    </source>
</evidence>
<evidence type="ECO:0007829" key="24">
    <source>
        <dbReference type="PDB" id="8JZN"/>
    </source>
</evidence>
<organism>
    <name type="scientific">Saccharomyces cerevisiae (strain ATCC 204508 / S288c)</name>
    <name type="common">Baker's yeast</name>
    <dbReference type="NCBI Taxonomy" id="559292"/>
    <lineage>
        <taxon>Eukaryota</taxon>
        <taxon>Fungi</taxon>
        <taxon>Dikarya</taxon>
        <taxon>Ascomycota</taxon>
        <taxon>Saccharomycotina</taxon>
        <taxon>Saccharomycetes</taxon>
        <taxon>Saccharomycetales</taxon>
        <taxon>Saccharomycetaceae</taxon>
        <taxon>Saccharomyces</taxon>
    </lineage>
</organism>
<feature type="chain" id="PRO_0000121725" description="1,3-beta-glucan synthase component FKS1">
    <location>
        <begin position="1"/>
        <end position="1876"/>
    </location>
</feature>
<feature type="topological domain" description="Cytoplasmic" evidence="1">
    <location>
        <begin position="1"/>
        <end position="454"/>
    </location>
</feature>
<feature type="transmembrane region" description="Helical" evidence="1">
    <location>
        <begin position="455"/>
        <end position="475"/>
    </location>
</feature>
<feature type="topological domain" description="Extracellular" evidence="1">
    <location>
        <begin position="476"/>
        <end position="492"/>
    </location>
</feature>
<feature type="transmembrane region" description="Helical" evidence="1">
    <location>
        <begin position="493"/>
        <end position="513"/>
    </location>
</feature>
<feature type="topological domain" description="Cytoplasmic" evidence="1">
    <location>
        <begin position="514"/>
        <end position="531"/>
    </location>
</feature>
<feature type="transmembrane region" description="Helical" evidence="1">
    <location>
        <begin position="532"/>
        <end position="552"/>
    </location>
</feature>
<feature type="topological domain" description="Extracellular" evidence="1">
    <location>
        <begin position="553"/>
        <end position="563"/>
    </location>
</feature>
<feature type="transmembrane region" description="Helical" evidence="1">
    <location>
        <begin position="564"/>
        <end position="584"/>
    </location>
</feature>
<feature type="topological domain" description="Cytoplasmic" evidence="1">
    <location>
        <begin position="585"/>
        <end position="621"/>
    </location>
</feature>
<feature type="transmembrane region" description="Helical" evidence="1">
    <location>
        <begin position="622"/>
        <end position="642"/>
    </location>
</feature>
<feature type="topological domain" description="Extracellular" evidence="1">
    <location>
        <begin position="643"/>
        <end position="678"/>
    </location>
</feature>
<feature type="transmembrane region" description="Helical" evidence="1">
    <location>
        <begin position="679"/>
        <end position="699"/>
    </location>
</feature>
<feature type="topological domain" description="Cytoplasmic" evidence="1">
    <location>
        <begin position="700"/>
        <end position="1358"/>
    </location>
</feature>
<feature type="transmembrane region" description="Helical" evidence="1">
    <location>
        <begin position="1359"/>
        <end position="1379"/>
    </location>
</feature>
<feature type="topological domain" description="Extracellular" evidence="1">
    <location>
        <begin position="1380"/>
        <end position="1444"/>
    </location>
</feature>
<feature type="transmembrane region" description="Helical" evidence="1">
    <location>
        <begin position="1445"/>
        <end position="1465"/>
    </location>
</feature>
<feature type="topological domain" description="Cytoplasmic" evidence="1">
    <location>
        <begin position="1466"/>
        <end position="1469"/>
    </location>
</feature>
<feature type="transmembrane region" description="Helical" evidence="1">
    <location>
        <begin position="1470"/>
        <end position="1490"/>
    </location>
</feature>
<feature type="topological domain" description="Extracellular" evidence="1">
    <location>
        <begin position="1491"/>
        <end position="1560"/>
    </location>
</feature>
<feature type="transmembrane region" description="Helical" evidence="1">
    <location>
        <begin position="1561"/>
        <end position="1581"/>
    </location>
</feature>
<feature type="topological domain" description="Cytoplasmic" evidence="1">
    <location>
        <begin position="1582"/>
        <end position="1601"/>
    </location>
</feature>
<feature type="transmembrane region" description="Helical" evidence="1">
    <location>
        <begin position="1602"/>
        <end position="1622"/>
    </location>
</feature>
<feature type="topological domain" description="Extracellular" evidence="1">
    <location>
        <begin position="1623"/>
        <end position="1643"/>
    </location>
</feature>
<feature type="transmembrane region" description="Helical" evidence="1">
    <location>
        <begin position="1644"/>
        <end position="1664"/>
    </location>
</feature>
<feature type="topological domain" description="Cytoplasmic" evidence="1">
    <location>
        <begin position="1665"/>
        <end position="1672"/>
    </location>
</feature>
<feature type="transmembrane region" description="Helical" evidence="1">
    <location>
        <begin position="1673"/>
        <end position="1695"/>
    </location>
</feature>
<feature type="topological domain" description="Extracellular" evidence="1">
    <location>
        <begin position="1696"/>
        <end position="1802"/>
    </location>
</feature>
<feature type="transmembrane region" description="Helical" evidence="1">
    <location>
        <begin position="1803"/>
        <end position="1823"/>
    </location>
</feature>
<feature type="topological domain" description="Cytoplasmic" evidence="1">
    <location>
        <begin position="1824"/>
        <end position="1876"/>
    </location>
</feature>
<feature type="region of interest" description="Disordered" evidence="2">
    <location>
        <begin position="1"/>
        <end position="108"/>
    </location>
</feature>
<feature type="compositionally biased region" description="Polar residues" evidence="2">
    <location>
        <begin position="1"/>
        <end position="25"/>
    </location>
</feature>
<feature type="compositionally biased region" description="Polar residues" evidence="2">
    <location>
        <begin position="60"/>
        <end position="71"/>
    </location>
</feature>
<feature type="modified residue" description="Phosphothreonine" evidence="20">
    <location>
        <position position="269"/>
    </location>
</feature>
<feature type="modified residue" description="Phosphothreonine" evidence="20">
    <location>
        <position position="272"/>
    </location>
</feature>
<feature type="cross-link" description="Glycyl lysine isopeptide (Lys-Gly) (interchain with G-Cter in ubiquitin)" evidence="21">
    <location>
        <position position="259"/>
    </location>
</feature>
<feature type="cross-link" description="Glycyl lysine isopeptide (Lys-Gly) (interchain with G-Cter in ubiquitin)" evidence="21">
    <location>
        <position position="275"/>
    </location>
</feature>
<feature type="cross-link" description="Glycyl lysine isopeptide (Lys-Gly) (interchain with G-Cter in ubiquitin)" evidence="21">
    <location>
        <position position="386"/>
    </location>
</feature>
<feature type="cross-link" description="Glycyl lysine isopeptide (Lys-Gly) (interchain with G-Cter in ubiquitin)" evidence="21">
    <location>
        <position position="910"/>
    </location>
</feature>
<feature type="cross-link" description="Glycyl lysine isopeptide (Lys-Gly) (interchain with G-Cter in ubiquitin)" evidence="21">
    <location>
        <position position="915"/>
    </location>
</feature>
<feature type="cross-link" description="Glycyl lysine isopeptide (Lys-Gly) (interchain with G-Cter in ubiquitin)" evidence="21">
    <location>
        <position position="1539"/>
    </location>
</feature>
<feature type="cross-link" description="Glycyl lysine isopeptide (Lys-Gly) (interchain with G-Cter in ubiquitin)" evidence="21">
    <location>
        <position position="1547"/>
    </location>
</feature>
<feature type="mutagenesis site" description="In 1132; temperature-sensitive mutant; no gross alteration in beta-glucan content of cells; when associated with N-329; N-335 and DEL-GSC2." evidence="4">
    <original>E</original>
    <variation>V</variation>
    <location>
        <position position="146"/>
    </location>
</feature>
<feature type="mutagenesis site" description="In 1082; temperature-sensitive mutant; no gross alteration in beta-glucan content of cells; when associated with DEL-GSC2." evidence="4">
    <original>V</original>
    <variation>N</variation>
    <location>
        <position position="302"/>
    </location>
</feature>
<feature type="mutagenesis site" description="In 1132; temperature-sensitive mutant; no gross alteration in beta-glucan content of cells; when associated with V-146; N-335 and DEL-GSC2." evidence="4">
    <original>Y</original>
    <variation>N</variation>
    <location>
        <position position="329"/>
    </location>
</feature>
<feature type="mutagenesis site" description="In 1132; temperature-sensitive mutant; no gross alteration in beta-glucan content of cells; when associated with V-146; N-329 and DEL-GSC2." evidence="4">
    <original>Y</original>
    <variation>N</variation>
    <location>
        <position position="335"/>
    </location>
</feature>
<feature type="mutagenesis site" description="In ACR79-5; selectively resistant to antibiotic arborcandin C." evidence="7">
    <original>N</original>
    <variation>K</variation>
    <location>
        <position position="470"/>
    </location>
</feature>
<feature type="mutagenesis site" description="In 1093; temperature-sensitive mutant; higher beta-glucan content of cells; when associated with T-761 and DEL-GSC2." evidence="4">
    <original>T</original>
    <variation>I</variation>
    <location>
        <position position="605"/>
    </location>
</feature>
<feature type="mutagenesis site" description="In ACR1A3; selectively resistant to antibiotic arborcandin C." evidence="7">
    <original>L</original>
    <variation>S</variation>
    <location>
        <position position="642"/>
    </location>
</feature>
<feature type="mutagenesis site" description="In 1163; temperature-sensitive mutant; no gross alteration in beta-glucan content of cells; when associated with V-722 and DEL-GSC2." evidence="4">
    <original>I</original>
    <variation>L</variation>
    <location>
        <position position="713"/>
    </location>
</feature>
<feature type="mutagenesis site" description="In 1163; temperature-sensitive mutant; no gross alteration in beta-glucan content of cells; when associated with L-713 and DEL-GSC2." evidence="4">
    <original>I</original>
    <variation>V</variation>
    <location>
        <position position="722"/>
    </location>
</feature>
<feature type="mutagenesis site" description="In 1093; temperature-sensitive mutant; higher beta-glucan content of cells; when associated with I-605 and DEL-GSC2." evidence="4">
    <original>M</original>
    <variation>T</variation>
    <location>
        <position position="761"/>
    </location>
</feature>
<feature type="mutagenesis site" description="In 1104; temperature-sensitive mutant; lower beta-glucan content of cells; when associated with E-920 and DEL-GSC2." evidence="4">
    <original>A</original>
    <variation>V</variation>
    <location>
        <position position="823"/>
    </location>
</feature>
<feature type="mutagenesis site" description="In 1014; temperature-sensitive mutant; no gross alteration in beta-glucan content of cells; partially K1 killer toxin-sensitive; when associated with DEL-GSC2." evidence="4">
    <original>T</original>
    <variation>A</variation>
    <location>
        <position position="828"/>
    </location>
</feature>
<feature type="mutagenesis site" description="In 1114; temperature-sensitive mutant; lower beta-glucan content of cells; when associated with G-932; D-934; Y-1020; N-1047 and DEL-GSC2." evidence="4">
    <original>I</original>
    <variation>T</variation>
    <location>
        <position position="853"/>
    </location>
</feature>
<feature type="mutagenesis site" description="In A6; temperature-sensitive mutant; lower beta-glucan content of cells; when associated with DEL-GSC2." evidence="4">
    <original>L</original>
    <variation>R</variation>
    <location>
        <position position="855"/>
    </location>
</feature>
<feature type="mutagenesis site" description="In 1144; temperature-sensitive mutant; lower beta-glucan content of cells; when associated with K-907; S-982 and DEL-GSC2." evidence="4">
    <original>L</original>
    <variation>F</variation>
    <location>
        <position position="872"/>
    </location>
</feature>
<feature type="mutagenesis site" description="In 1154; temperature-sensitive mutant which is able to grow at 25 degrees Celsius but fails to grow at temperatures above 35 degrees Celsius; defective in 1,3-beta-glucan synthesis and thus has lower beta-glucan content; hypersensitive to echinocandin B and to a chitin-binding reagent, Calcofluor white; fails to grow in a low glucose medium; when associated with S-899; P-977 and DEL-GSC2." evidence="4 5">
    <original>K</original>
    <variation>N</variation>
    <location>
        <position position="877"/>
    </location>
</feature>
<feature type="mutagenesis site" description="In 1154; temperature-sensitive mutant which is able to grow at 25 degrees Celsius but fails to grow at temperatures above 35 degrees Celsius; defective in 1,3-beta-glucan synthesis and thus has lower beta-glucan content; hypersensitive to echinocandin B and to a chitin-binding reagent, Calcofluor white; fails to grow in a low glucose medium; when associated with N-877; P-977 and DEL-GSC2." evidence="4 5">
    <original>A</original>
    <variation>S</variation>
    <location>
        <position position="899"/>
    </location>
</feature>
<feature type="mutagenesis site" description="In 1144; temperature-sensitive mutant; lower beta-glucan content of cells; when associated with F-872; S-982 and DEL-GSC2." evidence="4">
    <original>E</original>
    <variation>K</variation>
    <location>
        <position position="907"/>
    </location>
</feature>
<feature type="mutagenesis site" description="In 1104; temperature-sensitive mutant; lower beta-glucan content of cells; when associated with V-823 and DEL-GSC2." evidence="4">
    <original>D</original>
    <variation>E</variation>
    <location>
        <position position="920"/>
    </location>
</feature>
<feature type="mutagenesis site" description="In 1114; temperature-sensitive mutant; lower beta-glucan content of cells; when associated with T-853; D-934; Y-1020; N-1047 and DEL-GSC2." evidence="4">
    <original>A</original>
    <variation>G</variation>
    <location>
        <position position="932"/>
    </location>
</feature>
<feature type="mutagenesis site" description="In 1114; temperature-sensitive mutant; lower beta-glucan content of cells; when associated with T-853; G-932; Y-1020; N-1047 and DEL-GSC2." evidence="4">
    <original>E</original>
    <variation>D</variation>
    <location>
        <position position="934"/>
    </location>
</feature>
<feature type="mutagenesis site" description="In 1154; temperature-sensitive mutant which is able to grow at 25 degrees Celsius but fails to grow at temperatures above 35 degrees Celsius; defective in 1,3-beta-glucan synthesis and thus has lower beta-glucan content; hypersensitive to echinocandin B and to a chitin-binding reagent, Calcofluor white; fails to grow in a low glucose medium; when associated with N-877; S-899 and DEL-GSC2." evidence="4 5">
    <original>Q</original>
    <variation>P</variation>
    <location>
        <position position="977"/>
    </location>
</feature>
<feature type="mutagenesis site" description="In 1144; temperature-sensitive mutant; lower beta-glucan content of cells; when associated with F-872; K-907 and DEL-GSC2." evidence="4">
    <original>N</original>
    <variation>S</variation>
    <location>
        <position position="982"/>
    </location>
</feature>
<feature type="mutagenesis site" description="In 1114; temperature-sensitive mutant; lower beta-glucan content of cells; when associated with T-853; G-932; D-934; N-1047 and DEL-GSC2." evidence="4">
    <original>F</original>
    <variation>Y</variation>
    <location>
        <position position="1020"/>
    </location>
</feature>
<feature type="mutagenesis site" description="In 1114; temperature-sensitive mutant; lower beta-glucan content of cells; when associated with T-853; G-932; D-934; Y-1020 and DEL-GSC2." evidence="4">
    <original>I</original>
    <variation>N</variation>
    <location>
        <position position="1047"/>
    </location>
</feature>
<feature type="mutagenesis site" description="In F4; temperature-sensitive mutant; lower beta-glucan content of cells; when associated with DEL-GSC2." evidence="4">
    <original>E</original>
    <variation>G</variation>
    <location>
        <position position="1111"/>
    </location>
</feature>
<feature type="mutagenesis site" description="In 1125; temperature-sensitive mutant; lower beta-glucan content of cells and partially K1 killer toxin-resistant; when associated with D-1520 and DEL-GSC2." evidence="4">
    <original>F</original>
    <variation>Y</variation>
    <location>
        <position position="1258"/>
    </location>
</feature>
<feature type="mutagenesis site" description="In 1125; temperature-sensitive mutant; lower beta-glucan content of cells and partial K1 killer toxin-resistant phenotype; when associated with Y-1258 and DEL-GSC2." evidence="4">
    <original>N</original>
    <variation>D</variation>
    <location>
        <position position="1520"/>
    </location>
</feature>
<feature type="sequence conflict" description="In Ref. 1; AAC13763, 6; AAA79760 and 7; AAR86935/AAR86936/AAR86937." evidence="19" ref="1 6 7">
    <original>G</original>
    <variation>D</variation>
    <location>
        <position position="19"/>
    </location>
</feature>
<feature type="sequence conflict" description="In Ref. 1; AAC13763, 6; AAA79760 and 7; AAR86935/AAR86936/AAR86937." evidence="19" ref="1 6 7">
    <original>A</original>
    <variation>P</variation>
    <location>
        <position position="113"/>
    </location>
</feature>
<feature type="sequence conflict" description="In Ref. 1; AAC13763, 6; AAA79760 and 7; AAR86935/AAR86936/AAR86937." evidence="19" ref="1 6 7">
    <original>I</original>
    <variation>V</variation>
    <location>
        <position position="236"/>
    </location>
</feature>
<feature type="sequence conflict" description="In Ref. 1; AAC13763, 6; AAA79760 and 7; AAR86935/AAR86936/AAR86937." evidence="19" ref="1 6 7">
    <original>V</original>
    <variation>I</variation>
    <location>
        <position position="373"/>
    </location>
</feature>
<feature type="sequence conflict" description="In Ref. 1; AAC13763." evidence="19" ref="1">
    <original>K</original>
    <variation>T</variation>
    <location>
        <position position="437"/>
    </location>
</feature>
<feature type="sequence conflict" description="In Ref. 7; AAR86936." evidence="19" ref="7">
    <original>N</original>
    <variation>K</variation>
    <location>
        <position position="470"/>
    </location>
</feature>
<feature type="sequence conflict" description="In Ref. 1; AAC13763, 6; AAA79760 and 7; AAR86935/AAR86936/AAR86937." evidence="19" ref="1 6 7">
    <original>K</original>
    <variation>R</variation>
    <location>
        <position position="492"/>
    </location>
</feature>
<feature type="sequence conflict" description="In Ref. 7; AAR86937." evidence="19" ref="7">
    <original>L</original>
    <variation>S</variation>
    <location>
        <position position="642"/>
    </location>
</feature>
<feature type="sequence conflict" description="In Ref. 1; AAC13763, 6; AAA79760 and 7; AAR86935/AAR86936/AAR86937." evidence="19" ref="1 6 7">
    <original>V</original>
    <variation>F</variation>
    <location>
        <position position="1341"/>
    </location>
</feature>
<feature type="sequence conflict" description="In Ref. 1; AAC13763, 6; AAA79760 and 7; AAR86935/AAR86936/AAR86937." evidence="19" ref="1 6 7">
    <original>M</original>
    <variation>I</variation>
    <location>
        <position position="1457"/>
    </location>
</feature>
<feature type="sequence conflict" description="In Ref. 1; AAC13763, 6; AAA79760 and 7; AAR86935/AAR86936/AAR86937." evidence="19" ref="1 6 7">
    <original>T</original>
    <variation>S</variation>
    <location>
        <position position="1790"/>
    </location>
</feature>
<feature type="sequence conflict" description="In Ref. 1; AAC13763, 6; AAA79760 and 7; AAR86935/AAR86936/AAR86937." evidence="19" ref="1 6 7">
    <original>KH</original>
    <variation>DQ</variation>
    <location>
        <begin position="1827"/>
        <end position="1828"/>
    </location>
</feature>
<feature type="sequence conflict" description="In Ref. 1; AAC13763, 6; AAA79760 and 7; AAR86935/AAR86936/AAR86937." evidence="19" ref="1 6 7">
    <original>D</original>
    <variation>T</variation>
    <location>
        <position position="1834"/>
    </location>
</feature>
<feature type="sequence conflict" description="In Ref. 1; AAC13763, 6; AAA79760 and 7; AAR86935/AAR86936/AAR86937." evidence="19" ref="1 6 7">
    <original>I</original>
    <variation>V</variation>
    <location>
        <position position="1844"/>
    </location>
</feature>
<feature type="sequence conflict" description="In Ref. 1; AAC13763, 6; AAA79760 and 7; AAR86935/AAR86936/AAR86937." evidence="19" ref="1 6 7">
    <original>S</original>
    <variation>F</variation>
    <location>
        <position position="1853"/>
    </location>
</feature>
<feature type="strand" evidence="24">
    <location>
        <begin position="146"/>
        <end position="148"/>
    </location>
</feature>
<feature type="helix" evidence="24">
    <location>
        <begin position="149"/>
        <end position="152"/>
    </location>
</feature>
<feature type="helix" evidence="24">
    <location>
        <begin position="161"/>
        <end position="175"/>
    </location>
</feature>
<feature type="helix" evidence="24">
    <location>
        <begin position="179"/>
        <end position="196"/>
    </location>
</feature>
<feature type="turn" evidence="24">
    <location>
        <begin position="197"/>
        <end position="199"/>
    </location>
</feature>
<feature type="helix" evidence="24">
    <location>
        <begin position="202"/>
        <end position="213"/>
    </location>
</feature>
<feature type="strand" evidence="22">
    <location>
        <begin position="216"/>
        <end position="218"/>
    </location>
</feature>
<feature type="helix" evidence="24">
    <location>
        <begin position="220"/>
        <end position="228"/>
    </location>
</feature>
<feature type="helix" evidence="24">
    <location>
        <begin position="233"/>
        <end position="244"/>
    </location>
</feature>
<feature type="helix" evidence="24">
    <location>
        <begin position="282"/>
        <end position="294"/>
    </location>
</feature>
<feature type="helix" evidence="24">
    <location>
        <begin position="298"/>
        <end position="312"/>
    </location>
</feature>
<feature type="turn" evidence="24">
    <location>
        <begin position="313"/>
        <end position="319"/>
    </location>
</feature>
<feature type="helix" evidence="24">
    <location>
        <begin position="322"/>
        <end position="336"/>
    </location>
</feature>
<feature type="helix" evidence="24">
    <location>
        <begin position="339"/>
        <end position="342"/>
    </location>
</feature>
<feature type="helix" evidence="24">
    <location>
        <begin position="352"/>
        <end position="356"/>
    </location>
</feature>
<feature type="helix" evidence="24">
    <location>
        <begin position="358"/>
        <end position="369"/>
    </location>
</feature>
<feature type="strand" evidence="24">
    <location>
        <begin position="370"/>
        <end position="373"/>
    </location>
</feature>
<feature type="strand" evidence="24">
    <location>
        <begin position="376"/>
        <end position="379"/>
    </location>
</feature>
<feature type="turn" evidence="24">
    <location>
        <begin position="384"/>
        <end position="386"/>
    </location>
</feature>
<feature type="helix" evidence="24">
    <location>
        <begin position="390"/>
        <end position="394"/>
    </location>
</feature>
<feature type="helix" evidence="24">
    <location>
        <begin position="395"/>
        <end position="398"/>
    </location>
</feature>
<feature type="helix" evidence="24">
    <location>
        <begin position="400"/>
        <end position="403"/>
    </location>
</feature>
<feature type="strand" evidence="22">
    <location>
        <begin position="409"/>
        <end position="411"/>
    </location>
</feature>
<feature type="helix" evidence="24">
    <location>
        <begin position="414"/>
        <end position="416"/>
    </location>
</feature>
<feature type="helix" evidence="24">
    <location>
        <begin position="419"/>
        <end position="421"/>
    </location>
</feature>
<feature type="helix" evidence="24">
    <location>
        <begin position="423"/>
        <end position="425"/>
    </location>
</feature>
<feature type="helix" evidence="24">
    <location>
        <begin position="431"/>
        <end position="433"/>
    </location>
</feature>
<feature type="helix" evidence="24">
    <location>
        <begin position="444"/>
        <end position="451"/>
    </location>
</feature>
<feature type="helix" evidence="24">
    <location>
        <begin position="453"/>
        <end position="469"/>
    </location>
</feature>
<feature type="helix" evidence="24">
    <location>
        <begin position="472"/>
        <end position="474"/>
    </location>
</feature>
<feature type="helix" evidence="24">
    <location>
        <begin position="489"/>
        <end position="496"/>
    </location>
</feature>
<feature type="helix" evidence="24">
    <location>
        <begin position="498"/>
        <end position="514"/>
    </location>
</feature>
<feature type="turn" evidence="24">
    <location>
        <begin position="515"/>
        <end position="517"/>
    </location>
</feature>
<feature type="strand" evidence="24">
    <location>
        <begin position="522"/>
        <end position="526"/>
    </location>
</feature>
<feature type="helix" evidence="24">
    <location>
        <begin position="527"/>
        <end position="551"/>
    </location>
</feature>
<feature type="strand" evidence="22">
    <location>
        <begin position="554"/>
        <end position="556"/>
    </location>
</feature>
<feature type="helix" evidence="24">
    <location>
        <begin position="560"/>
        <end position="582"/>
    </location>
</feature>
<feature type="turn" evidence="22">
    <location>
        <begin position="585"/>
        <end position="589"/>
    </location>
</feature>
<feature type="strand" evidence="24">
    <location>
        <begin position="600"/>
        <end position="602"/>
    </location>
</feature>
<feature type="helix" evidence="24">
    <location>
        <begin position="604"/>
        <end position="607"/>
    </location>
</feature>
<feature type="helix" evidence="24">
    <location>
        <begin position="616"/>
        <end position="638"/>
    </location>
</feature>
<feature type="turn" evidence="24">
    <location>
        <begin position="639"/>
        <end position="641"/>
    </location>
</feature>
<feature type="helix" evidence="24">
    <location>
        <begin position="642"/>
        <end position="644"/>
    </location>
</feature>
<feature type="helix" evidence="24">
    <location>
        <begin position="645"/>
        <end position="651"/>
    </location>
</feature>
<feature type="turn" evidence="24">
    <location>
        <begin position="662"/>
        <end position="664"/>
    </location>
</feature>
<feature type="strand" evidence="24">
    <location>
        <begin position="667"/>
        <end position="669"/>
    </location>
</feature>
<feature type="helix" evidence="24">
    <location>
        <begin position="672"/>
        <end position="710"/>
    </location>
</feature>
<feature type="turn" evidence="23">
    <location>
        <begin position="711"/>
        <end position="714"/>
    </location>
</feature>
<feature type="helix" evidence="24">
    <location>
        <begin position="719"/>
        <end position="724"/>
    </location>
</feature>
<feature type="helix" evidence="24">
    <location>
        <begin position="726"/>
        <end position="733"/>
    </location>
</feature>
<feature type="strand" evidence="24">
    <location>
        <begin position="738"/>
        <end position="741"/>
    </location>
</feature>
<feature type="helix" evidence="24">
    <location>
        <begin position="746"/>
        <end position="763"/>
    </location>
</feature>
<feature type="helix" evidence="24">
    <location>
        <begin position="769"/>
        <end position="773"/>
    </location>
</feature>
<feature type="strand" evidence="24">
    <location>
        <begin position="778"/>
        <end position="781"/>
    </location>
</feature>
<feature type="strand" evidence="24">
    <location>
        <begin position="783"/>
        <end position="786"/>
    </location>
</feature>
<feature type="strand" evidence="24">
    <location>
        <begin position="788"/>
        <end position="791"/>
    </location>
</feature>
<feature type="helix" evidence="24">
    <location>
        <begin position="795"/>
        <end position="798"/>
    </location>
</feature>
<feature type="helix" evidence="22">
    <location>
        <begin position="810"/>
        <end position="812"/>
    </location>
</feature>
<feature type="helix" evidence="24">
    <location>
        <begin position="814"/>
        <end position="825"/>
    </location>
</feature>
<feature type="helix" evidence="24">
    <location>
        <begin position="836"/>
        <end position="838"/>
    </location>
</feature>
<feature type="strand" evidence="24">
    <location>
        <begin position="842"/>
        <end position="850"/>
    </location>
</feature>
<feature type="helix" evidence="24">
    <location>
        <begin position="857"/>
        <end position="861"/>
    </location>
</feature>
<feature type="strand" evidence="22">
    <location>
        <begin position="867"/>
        <end position="870"/>
    </location>
</feature>
<feature type="helix" evidence="24">
    <location>
        <begin position="872"/>
        <end position="879"/>
    </location>
</feature>
<feature type="helix" evidence="24">
    <location>
        <begin position="881"/>
        <end position="898"/>
    </location>
</feature>
<feature type="helix" evidence="24">
    <location>
        <begin position="933"/>
        <end position="944"/>
    </location>
</feature>
<feature type="strand" evidence="22">
    <location>
        <begin position="946"/>
        <end position="948"/>
    </location>
</feature>
<feature type="helix" evidence="24">
    <location>
        <begin position="950"/>
        <end position="957"/>
    </location>
</feature>
<feature type="helix" evidence="24">
    <location>
        <begin position="959"/>
        <end position="970"/>
    </location>
</feature>
<feature type="helix" evidence="24">
    <location>
        <begin position="973"/>
        <end position="979"/>
    </location>
</feature>
<feature type="helix" evidence="24">
    <location>
        <begin position="983"/>
        <end position="997"/>
    </location>
</feature>
<feature type="strand" evidence="24">
    <location>
        <begin position="998"/>
        <end position="1004"/>
    </location>
</feature>
<feature type="helix" evidence="24">
    <location>
        <begin position="1007"/>
        <end position="1009"/>
    </location>
</feature>
<feature type="helix" evidence="24">
    <location>
        <begin position="1012"/>
        <end position="1024"/>
    </location>
</feature>
<feature type="strand" evidence="24">
    <location>
        <begin position="1029"/>
        <end position="1036"/>
    </location>
</feature>
<feature type="strand" evidence="24">
    <location>
        <begin position="1039"/>
        <end position="1043"/>
    </location>
</feature>
<feature type="strand" evidence="24">
    <location>
        <begin position="1046"/>
        <end position="1053"/>
    </location>
</feature>
<feature type="strand" evidence="22">
    <location>
        <begin position="1054"/>
        <end position="1056"/>
    </location>
</feature>
<feature type="strand" evidence="22">
    <location>
        <begin position="1060"/>
        <end position="1064"/>
    </location>
</feature>
<feature type="strand" evidence="24">
    <location>
        <begin position="1067"/>
        <end position="1071"/>
    </location>
</feature>
<feature type="strand" evidence="24">
    <location>
        <begin position="1079"/>
        <end position="1081"/>
    </location>
</feature>
<feature type="helix" evidence="24">
    <location>
        <begin position="1082"/>
        <end position="1088"/>
    </location>
</feature>
<feature type="helix" evidence="24">
    <location>
        <begin position="1090"/>
        <end position="1092"/>
    </location>
</feature>
<feature type="strand" evidence="24">
    <location>
        <begin position="1095"/>
        <end position="1100"/>
    </location>
</feature>
<feature type="helix" evidence="24">
    <location>
        <begin position="1109"/>
        <end position="1112"/>
    </location>
</feature>
<feature type="helix" evidence="24">
    <location>
        <begin position="1115"/>
        <end position="1118"/>
    </location>
</feature>
<feature type="helix" evidence="24">
    <location>
        <begin position="1119"/>
        <end position="1122"/>
    </location>
</feature>
<feature type="helix" evidence="24">
    <location>
        <begin position="1139"/>
        <end position="1141"/>
    </location>
</feature>
<feature type="strand" evidence="24">
    <location>
        <begin position="1148"/>
        <end position="1158"/>
    </location>
</feature>
<feature type="helix" evidence="24">
    <location>
        <begin position="1172"/>
        <end position="1186"/>
    </location>
</feature>
<feature type="turn" evidence="22">
    <location>
        <begin position="1188"/>
        <end position="1190"/>
    </location>
</feature>
<feature type="strand" evidence="24">
    <location>
        <begin position="1198"/>
        <end position="1200"/>
    </location>
</feature>
<feature type="helix" evidence="24">
    <location>
        <begin position="1201"/>
        <end position="1205"/>
    </location>
</feature>
<feature type="turn" evidence="24">
    <location>
        <begin position="1206"/>
        <end position="1208"/>
    </location>
</feature>
<feature type="strand" evidence="22">
    <location>
        <begin position="1221"/>
        <end position="1223"/>
    </location>
</feature>
<feature type="helix" evidence="24">
    <location>
        <begin position="1228"/>
        <end position="1231"/>
    </location>
</feature>
<feature type="strand" evidence="24">
    <location>
        <begin position="1235"/>
        <end position="1247"/>
    </location>
</feature>
<feature type="helix" evidence="24">
    <location>
        <begin position="1268"/>
        <end position="1271"/>
    </location>
</feature>
<feature type="helix" evidence="24">
    <location>
        <begin position="1273"/>
        <end position="1279"/>
    </location>
</feature>
<feature type="helix" evidence="24">
    <location>
        <begin position="1284"/>
        <end position="1293"/>
    </location>
</feature>
<feature type="helix" evidence="24">
    <location>
        <begin position="1295"/>
        <end position="1324"/>
    </location>
</feature>
<feature type="helix" evidence="24">
    <location>
        <begin position="1349"/>
        <end position="1352"/>
    </location>
</feature>
<feature type="helix" evidence="24">
    <location>
        <begin position="1354"/>
        <end position="1367"/>
    </location>
</feature>
<feature type="helix" evidence="24">
    <location>
        <begin position="1368"/>
        <end position="1370"/>
    </location>
</feature>
<feature type="helix" evidence="24">
    <location>
        <begin position="1371"/>
        <end position="1380"/>
    </location>
</feature>
<feature type="helix" evidence="24">
    <location>
        <begin position="1385"/>
        <end position="1396"/>
    </location>
</feature>
<feature type="helix" evidence="22">
    <location>
        <begin position="1399"/>
        <end position="1405"/>
    </location>
</feature>
<feature type="strand" evidence="22">
    <location>
        <begin position="1406"/>
        <end position="1408"/>
    </location>
</feature>
<feature type="helix" evidence="22">
    <location>
        <begin position="1409"/>
        <end position="1417"/>
    </location>
</feature>
<feature type="helix" evidence="24">
    <location>
        <begin position="1438"/>
        <end position="1444"/>
    </location>
</feature>
<feature type="turn" evidence="24">
    <location>
        <begin position="1446"/>
        <end position="1449"/>
    </location>
</feature>
<feature type="helix" evidence="24">
    <location>
        <begin position="1450"/>
        <end position="1466"/>
    </location>
</feature>
<feature type="helix" evidence="24">
    <location>
        <begin position="1472"/>
        <end position="1484"/>
    </location>
</feature>
<feature type="turn" evidence="24">
    <location>
        <begin position="1486"/>
        <end position="1488"/>
    </location>
</feature>
<feature type="helix" evidence="24">
    <location>
        <begin position="1496"/>
        <end position="1511"/>
    </location>
</feature>
<feature type="helix" evidence="24">
    <location>
        <begin position="1561"/>
        <end position="1564"/>
    </location>
</feature>
<feature type="helix" evidence="24">
    <location>
        <begin position="1566"/>
        <end position="1582"/>
    </location>
</feature>
<feature type="helix" evidence="24">
    <location>
        <begin position="1598"/>
        <end position="1622"/>
    </location>
</feature>
<feature type="helix" evidence="24">
    <location>
        <begin position="1641"/>
        <end position="1664"/>
    </location>
</feature>
<feature type="helix" evidence="24">
    <location>
        <begin position="1669"/>
        <end position="1693"/>
    </location>
</feature>
<feature type="helix" evidence="24">
    <location>
        <begin position="1725"/>
        <end position="1752"/>
    </location>
</feature>
<feature type="helix" evidence="24">
    <location>
        <begin position="1755"/>
        <end position="1758"/>
    </location>
</feature>
<feature type="strand" evidence="24">
    <location>
        <begin position="1760"/>
        <end position="1762"/>
    </location>
</feature>
<feature type="helix" evidence="24">
    <location>
        <begin position="1764"/>
        <end position="1773"/>
    </location>
</feature>
<feature type="helix" evidence="24">
    <location>
        <begin position="1787"/>
        <end position="1799"/>
    </location>
</feature>
<feature type="helix" evidence="24">
    <location>
        <begin position="1801"/>
        <end position="1820"/>
    </location>
</feature>
<feature type="helix" evidence="22">
    <location>
        <begin position="1821"/>
        <end position="1823"/>
    </location>
</feature>
<feature type="turn" evidence="24">
    <location>
        <begin position="1836"/>
        <end position="1839"/>
    </location>
</feature>
<keyword id="KW-0002">3D-structure</keyword>
<keyword id="KW-1003">Cell membrane</keyword>
<keyword id="KW-0961">Cell wall biogenesis/degradation</keyword>
<keyword id="KW-0328">Glycosyltransferase</keyword>
<keyword id="KW-1017">Isopeptide bond</keyword>
<keyword id="KW-0472">Membrane</keyword>
<keyword id="KW-0496">Mitochondrion</keyword>
<keyword id="KW-0597">Phosphoprotein</keyword>
<keyword id="KW-1185">Reference proteome</keyword>
<keyword id="KW-0808">Transferase</keyword>
<keyword id="KW-0812">Transmembrane</keyword>
<keyword id="KW-1133">Transmembrane helix</keyword>
<keyword id="KW-0832">Ubl conjugation</keyword>
<name>FKS1_YEAST</name>
<sequence>MNTDQQPYQGQTDYTQGPGNGQSQEQDYDQYGQPLYPSQADGYYDPNVAAGTEADMYGQQPPNESYDQDYTNGEYYGQPPNMAAQDGENFSDFSSYGPPGTPGYDSYGGQYTASQMSYGEPNSSGTSTPIYGNYDPNAIAMALPNEPYPAWTADSQSPVSIEQIEDIFIDLTNRLGFQRDSMRNMFDHFMVLLDSRSSRMSPDQALLSLHADYIGGDTANYKKWYFAAQLDMDDEIGFRNMSLGKLSRKARKAKKKNKKAMEEANPEDTEETLNKIEGDNSLEAADFRWKAKMNQLSPLERVRHIALYLLCWGEANQVRFTAECLCFIYKCALDYLDSPLCQQRQEPMPEGDFLNRVITPIYHFIRNQVYEIVDGRFVKRERDHNKIVGYDDLNQLFWYPEGIAKIVLEDGTKLIELPLEERYLRLGDVVWDDVFFKTYKETRTWLHLVTNFNRIWVMHISIFWMYFAYNSPTFYTHNYQQLVDNQPLAAYKWASCALGGTVASLIQIVATLCEWSFVPRKWAGAQHLSRRFWFLCIIFGINLGPIIFVFAYDKDTVYSTAAHVVAAVMFFVAVATIIFFSIMPLGGLFTSYMKKSTRRYVASQTFTAAFAPLHGLDRWMSYLVWVTVFAAKYSESYYFLVLSLRDPIRILSTTAMRCTGEYWWGAVLCKVQPKIVLGLVIATDFILFFLDTYLWYIIVNTIFSVGKSFYLGISILTPWRNIFTRLPKRIYSKILATTDMEIKYKPKVLISQVWNAIIISMYREHLLAIDHVQKLLYHQVPSEIEGKRTLRAPTFFVSQDDNNFETEFFPRDSEAERRISFFAQSLSTPIPEPLPVDNMPTFTVLTPHYAERILLSLREIIREDDQFSRVTLLEYLKQLHPVEWECFVKDTKILAEETAAYEGNENEAEKEDALKSQIDDLPFYCIGFKSAAPEYTLRTRIWASLRSQTLYRTISGFMNYSRAIKLLYRVENPEIVQMFGGNAEGLERELEKMARRKFKFLVSMQRLAKFKPHELENAEFLLRAYPDLQIAYLDEEPPLTEGEEPRIYSALIDGHCEILDNGRRRPKFRVQLSGNPILGDGKSDNQNHALIFYRGEYIQLIDANQDNYLEECLKIRSVLAEFEELNVEQVNPYAPGLRYEEQTTNHPVAIVGAREYIFSENSGVLGDVAAGKEQTFGTLFARTLSQIGGKLHYGHPDFINATFMTTRGGVSKAQKGLHLNEDIYAGMNAMLRGGRIKHCEYYQCGKGRDLGFGTILNFTTKIGAGMGEQMLSREYYYLGTQLPVDRFLTFYYAHPGFHLNNLFIQLSLQMFMLTLVNLSSLAHESIMCIYDRNKPKTDVLVPIGCYNFQPAVDWVRRYTLSIFIVFWIAFVPIVVQELIERGLWKATQRFFCHLLSLSPMFEVFAGQIYSSALLSDLAIGGARYISTGRGFATSRIPFSILYSRFAGSAIYMGARSMLMLLFGTVAHWQAPLLWFWASLSSLIFAPFVFNPHQFAWEDFFLDYRDYIRWLSRGNNQYHRNSWIGYVRMSRARITGFKRKLVGDESEKAAGDASRAHRTNLIMAEIIPCAIYAAGCFIAFTFINAQTGVKTTDDDRVNSVLRIIICTLAPIAVNLGVLFFCMGMSCCSGPLFGMCCKKTGSVMAGIAHGVAVIVHIAFFIVMWVLESFNFVRMLIGVVTCIQCQRLIFHCMTALMLTREFKNDHANTAFWTGKWYGKGMGYMAWTQPSRELTAKVIELSEFAADFVLGHVILICQLPLIIIPKIDKFHSIMLFWLKPSRQIRPPIYSLKQTRLRKRMVKKYCSLYFLVLAIFAGCIIGPAVASAKIHKHIGDSLDGVVHNLFQPINTTNNDTGSQMSTYQSHYYTHTPSLKTWSTIK</sequence>
<accession>P38631</accession>
<accession>D6VYY0</accession>
<accession>Q53YZ4</accession>
<accession>Q6TKS9</accession>
<accession>Q6TKT0</accession>
<proteinExistence type="evidence at protein level"/>
<dbReference type="EC" id="2.4.1.34" evidence="4 5 10 14 16"/>
<dbReference type="EMBL" id="U08459">
    <property type="protein sequence ID" value="AAC13763.1"/>
    <property type="molecule type" value="Genomic_DNA"/>
</dbReference>
<dbReference type="EMBL" id="U12893">
    <property type="protein sequence ID" value="AAC48981.1"/>
    <property type="molecule type" value="Genomic_DNA"/>
</dbReference>
<dbReference type="EMBL" id="D42126">
    <property type="protein sequence ID" value="BAA07706.1"/>
    <property type="molecule type" value="Genomic_DNA"/>
</dbReference>
<dbReference type="EMBL" id="X80817">
    <property type="protein sequence ID" value="CAA56783.1"/>
    <property type="molecule type" value="Genomic_DNA"/>
</dbReference>
<dbReference type="EMBL" id="Z46262">
    <property type="protein sequence ID" value="CAA86404.1"/>
    <property type="molecule type" value="Genomic_DNA"/>
</dbReference>
<dbReference type="EMBL" id="L35923">
    <property type="protein sequence ID" value="AAA79760.1"/>
    <property type="molecule type" value="Genomic_DNA"/>
</dbReference>
<dbReference type="EMBL" id="AY395693">
    <property type="protein sequence ID" value="AAR86935.1"/>
    <property type="molecule type" value="Genomic_DNA"/>
</dbReference>
<dbReference type="EMBL" id="AY395694">
    <property type="protein sequence ID" value="AAR86936.1"/>
    <property type="molecule type" value="Genomic_DNA"/>
</dbReference>
<dbReference type="EMBL" id="AY395695">
    <property type="protein sequence ID" value="AAR86937.1"/>
    <property type="molecule type" value="Genomic_DNA"/>
</dbReference>
<dbReference type="EMBL" id="U19028">
    <property type="protein sequence ID" value="AAB67256.1"/>
    <property type="molecule type" value="Genomic_DNA"/>
</dbReference>
<dbReference type="EMBL" id="BK006945">
    <property type="protein sequence ID" value="DAA09646.1"/>
    <property type="molecule type" value="Genomic_DNA"/>
</dbReference>
<dbReference type="PIR" id="S50235">
    <property type="entry name" value="S50235"/>
</dbReference>
<dbReference type="RefSeq" id="NP_013446.1">
    <property type="nucleotide sequence ID" value="NM_001182231.1"/>
</dbReference>
<dbReference type="PDB" id="7XE4">
    <property type="method" value="EM"/>
    <property type="resolution" value="3.40 A"/>
    <property type="chains" value="F=1-1876"/>
</dbReference>
<dbReference type="PDB" id="7YUY">
    <property type="method" value="EM"/>
    <property type="resolution" value="3.50 A"/>
    <property type="chains" value="F=1-1876"/>
</dbReference>
<dbReference type="PDB" id="8JZN">
    <property type="method" value="EM"/>
    <property type="resolution" value="2.47 A"/>
    <property type="chains" value="A=1-1876"/>
</dbReference>
<dbReference type="PDB" id="8WL6">
    <property type="method" value="EM"/>
    <property type="resolution" value="3.16 A"/>
    <property type="chains" value="A=1-1876"/>
</dbReference>
<dbReference type="PDB" id="8WLA">
    <property type="method" value="EM"/>
    <property type="resolution" value="3.40 A"/>
    <property type="chains" value="B=1-1876"/>
</dbReference>
<dbReference type="PDBsum" id="7XE4"/>
<dbReference type="PDBsum" id="7YUY"/>
<dbReference type="PDBsum" id="8JZN"/>
<dbReference type="PDBsum" id="8WL6"/>
<dbReference type="PDBsum" id="8WLA"/>
<dbReference type="EMDB" id="EMD-33154"/>
<dbReference type="EMDB" id="EMD-34115"/>
<dbReference type="EMDB" id="EMD-36748"/>
<dbReference type="EMDB" id="EMD-37612"/>
<dbReference type="EMDB" id="EMD-37614"/>
<dbReference type="SMR" id="P38631"/>
<dbReference type="BioGRID" id="31604">
    <property type="interactions" value="571"/>
</dbReference>
<dbReference type="ComplexPortal" id="CPX-1812">
    <property type="entry name" value="1,3-beta-D-glucan synthase complex, FKS1-RHO1 variant"/>
</dbReference>
<dbReference type="DIP" id="DIP-5749N"/>
<dbReference type="FunCoup" id="P38631">
    <property type="interactions" value="808"/>
</dbReference>
<dbReference type="IntAct" id="P38631">
    <property type="interactions" value="84"/>
</dbReference>
<dbReference type="MINT" id="P38631"/>
<dbReference type="STRING" id="4932.YLR342W"/>
<dbReference type="CAZy" id="GT48">
    <property type="family name" value="Glycosyltransferase Family 48"/>
</dbReference>
<dbReference type="TCDB" id="9.B.119.1.1">
    <property type="family name" value="the glycan synthase, fks1 (fks1) family"/>
</dbReference>
<dbReference type="GlyGen" id="P38631">
    <property type="glycosylation" value="1 site"/>
</dbReference>
<dbReference type="iPTMnet" id="P38631"/>
<dbReference type="PaxDb" id="4932-YLR342W"/>
<dbReference type="PeptideAtlas" id="P38631"/>
<dbReference type="EnsemblFungi" id="YLR342W_mRNA">
    <property type="protein sequence ID" value="YLR342W"/>
    <property type="gene ID" value="YLR342W"/>
</dbReference>
<dbReference type="GeneID" id="851055"/>
<dbReference type="KEGG" id="sce:YLR342W"/>
<dbReference type="AGR" id="SGD:S000004334"/>
<dbReference type="SGD" id="S000004334">
    <property type="gene designation" value="FKS1"/>
</dbReference>
<dbReference type="VEuPathDB" id="FungiDB:YLR342W"/>
<dbReference type="eggNOG" id="KOG0916">
    <property type="taxonomic scope" value="Eukaryota"/>
</dbReference>
<dbReference type="GeneTree" id="ENSGT00940000176776"/>
<dbReference type="HOGENOM" id="CLU_000844_0_1_1"/>
<dbReference type="InParanoid" id="P38631"/>
<dbReference type="OMA" id="TVSMQRY"/>
<dbReference type="OrthoDB" id="1880850at2759"/>
<dbReference type="BioCyc" id="YEAST:YLR342W-MONOMER"/>
<dbReference type="BioGRID-ORCS" id="851055">
    <property type="hits" value="8 hits in 10 CRISPR screens"/>
</dbReference>
<dbReference type="CD-CODE" id="E03F929F">
    <property type="entry name" value="Stress granule"/>
</dbReference>
<dbReference type="PRO" id="PR:P38631"/>
<dbReference type="Proteomes" id="UP000002311">
    <property type="component" value="Chromosome XII"/>
</dbReference>
<dbReference type="RNAct" id="P38631">
    <property type="molecule type" value="protein"/>
</dbReference>
<dbReference type="GO" id="GO:0000148">
    <property type="term" value="C:1,3-beta-D-glucan synthase complex"/>
    <property type="evidence" value="ECO:0000314"/>
    <property type="project" value="SGD"/>
</dbReference>
<dbReference type="GO" id="GO:0030479">
    <property type="term" value="C:actin cortical patch"/>
    <property type="evidence" value="ECO:0000314"/>
    <property type="project" value="SGD"/>
</dbReference>
<dbReference type="GO" id="GO:0071944">
    <property type="term" value="C:cell periphery"/>
    <property type="evidence" value="ECO:0007005"/>
    <property type="project" value="SGD"/>
</dbReference>
<dbReference type="GO" id="GO:0005933">
    <property type="term" value="C:cellular bud"/>
    <property type="evidence" value="ECO:0007005"/>
    <property type="project" value="SGD"/>
</dbReference>
<dbReference type="GO" id="GO:0005935">
    <property type="term" value="C:cellular bud neck"/>
    <property type="evidence" value="ECO:0000314"/>
    <property type="project" value="SGD"/>
</dbReference>
<dbReference type="GO" id="GO:0005934">
    <property type="term" value="C:cellular bud tip"/>
    <property type="evidence" value="ECO:0000314"/>
    <property type="project" value="SGD"/>
</dbReference>
<dbReference type="GO" id="GO:0009277">
    <property type="term" value="C:fungal-type cell wall"/>
    <property type="evidence" value="ECO:0000303"/>
    <property type="project" value="ComplexPortal"/>
</dbReference>
<dbReference type="GO" id="GO:0005739">
    <property type="term" value="C:mitochondrion"/>
    <property type="evidence" value="ECO:0007005"/>
    <property type="project" value="SGD"/>
</dbReference>
<dbReference type="GO" id="GO:0005886">
    <property type="term" value="C:plasma membrane"/>
    <property type="evidence" value="ECO:0000314"/>
    <property type="project" value="SGD"/>
</dbReference>
<dbReference type="GO" id="GO:0003843">
    <property type="term" value="F:1,3-beta-D-glucan synthase activity"/>
    <property type="evidence" value="ECO:0000314"/>
    <property type="project" value="SGD"/>
</dbReference>
<dbReference type="GO" id="GO:0006075">
    <property type="term" value="P:(1-&gt;3)-beta-D-glucan biosynthetic process"/>
    <property type="evidence" value="ECO:0000314"/>
    <property type="project" value="SGD"/>
</dbReference>
<dbReference type="GO" id="GO:0030476">
    <property type="term" value="P:ascospore wall assembly"/>
    <property type="evidence" value="ECO:0000303"/>
    <property type="project" value="ComplexPortal"/>
</dbReference>
<dbReference type="GO" id="GO:0009272">
    <property type="term" value="P:fungal-type cell wall biogenesis"/>
    <property type="evidence" value="ECO:0000303"/>
    <property type="project" value="ComplexPortal"/>
</dbReference>
<dbReference type="GO" id="GO:0051278">
    <property type="term" value="P:fungal-type cell wall polysaccharide biosynthetic process"/>
    <property type="evidence" value="ECO:0000318"/>
    <property type="project" value="GO_Central"/>
</dbReference>
<dbReference type="GO" id="GO:0045807">
    <property type="term" value="P:positive regulation of endocytosis"/>
    <property type="evidence" value="ECO:0000315"/>
    <property type="project" value="SGD"/>
</dbReference>
<dbReference type="GO" id="GO:0008361">
    <property type="term" value="P:regulation of cell size"/>
    <property type="evidence" value="ECO:0000315"/>
    <property type="project" value="SGD"/>
</dbReference>
<dbReference type="InterPro" id="IPR026899">
    <property type="entry name" value="FKS1-like_dom1"/>
</dbReference>
<dbReference type="InterPro" id="IPR056261">
    <property type="entry name" value="FKS1-like_dom2"/>
</dbReference>
<dbReference type="InterPro" id="IPR003440">
    <property type="entry name" value="Glyco_trans_48_dom"/>
</dbReference>
<dbReference type="PANTHER" id="PTHR12741:SF48">
    <property type="entry name" value="1,3-BETA-GLUCAN SYNTHASE COMPONENT FKS1-RELATED"/>
    <property type="match status" value="1"/>
</dbReference>
<dbReference type="PANTHER" id="PTHR12741">
    <property type="entry name" value="LYST-INTERACTING PROTEIN LIP5 DOPAMINE RESPONSIVE PROTEIN DRG-1"/>
    <property type="match status" value="1"/>
</dbReference>
<dbReference type="Pfam" id="PF14288">
    <property type="entry name" value="FKS1_dom1"/>
    <property type="match status" value="1"/>
</dbReference>
<dbReference type="Pfam" id="PF23605">
    <property type="entry name" value="FKS1_dom2"/>
    <property type="match status" value="1"/>
</dbReference>
<dbReference type="Pfam" id="PF02364">
    <property type="entry name" value="Glucan_synthase"/>
    <property type="match status" value="1"/>
</dbReference>
<dbReference type="SMART" id="SM01205">
    <property type="entry name" value="FKS1_dom1"/>
    <property type="match status" value="1"/>
</dbReference>
<protein>
    <recommendedName>
        <fullName evidence="17">1,3-beta-glucan synthase component FKS1</fullName>
        <ecNumber evidence="4 5 10 14 16">2.4.1.34</ecNumber>
    </recommendedName>
    <alternativeName>
        <fullName>1,3-beta-D-glucan-UDP glucosyltransferase</fullName>
    </alternativeName>
    <alternativeName>
        <fullName>Calcineurin dependent protein 1</fullName>
    </alternativeName>
    <alternativeName>
        <fullName>Calcofluor white hypersensitivity protein 53</fullName>
    </alternativeName>
    <alternativeName>
        <fullName>Echinocandin target gene protein 1</fullName>
    </alternativeName>
    <alternativeName>
        <fullName>FK506 sensitivity protein 1</fullName>
    </alternativeName>
    <alternativeName>
        <fullName>Glucan synthase of cerevisiae protein 1</fullName>
    </alternativeName>
    <alternativeName>
        <fullName>Papulacandin B resistance protein 1</fullName>
    </alternativeName>
</protein>
<gene>
    <name type="primary">FKS1</name>
    <name type="synonym">CND1</name>
    <name type="synonym">CWH53</name>
    <name type="synonym">ETG1</name>
    <name type="synonym">GLS1</name>
    <name evidence="18" type="synonym">GSC1</name>
    <name type="synonym">PBR1</name>
    <name type="ordered locus">YLR342W</name>
    <name type="ORF">L8300.6</name>
</gene>
<comment type="function">
    <text evidence="3">Alternate catalytic subunit of the 1,3-beta-glucan synthase (GS) complex. Synthesizes 1,3-beta-glucan, a major structural component of the yeast cell wall. Involved in cell wall synthesis, maintenance and remodeling.</text>
</comment>
<comment type="catalytic activity">
    <reaction evidence="4 5 10 14 16">
        <text>[(1-&gt;3)-beta-D-glucosyl](n) + UDP-alpha-D-glucose = [(1-&gt;3)-beta-D-glucosyl](n+1) + UDP + H(+)</text>
        <dbReference type="Rhea" id="RHEA:21476"/>
        <dbReference type="Rhea" id="RHEA-COMP:11146"/>
        <dbReference type="Rhea" id="RHEA-COMP:14303"/>
        <dbReference type="ChEBI" id="CHEBI:15378"/>
        <dbReference type="ChEBI" id="CHEBI:37671"/>
        <dbReference type="ChEBI" id="CHEBI:58223"/>
        <dbReference type="ChEBI" id="CHEBI:58885"/>
        <dbReference type="EC" id="2.4.1.34"/>
    </reaction>
</comment>
<comment type="subunit">
    <text evidence="15 16">Component of the 1,3-beta-glucan synthase (GS) complex, composed of two alternate catalytic subunits FKS1 or GSC2, and a regulatory subunit RHO1. Interacts with RHO1, which is a GTP-binding protein.</text>
</comment>
<comment type="interaction">
    <interactant intactId="EBI-7708">
        <id>P38631</id>
    </interactant>
    <interactant intactId="EBI-15121">
        <id>P06780</id>
        <label>RHO1</label>
    </interactant>
    <organismsDiffer>false</organismsDiffer>
    <experiments>3</experiments>
</comment>
<comment type="subcellular location">
    <subcellularLocation>
        <location evidence="3 4 6 15">Mitochondrion</location>
    </subcellularLocation>
    <subcellularLocation>
        <location evidence="19">Cell membrane</location>
        <topology evidence="19">Multi-pass membrane protein</topology>
    </subcellularLocation>
    <text>Localizes to the sites of polarized growth. Colocalizes with cortical actin patches and moves on the cell surface at the sites of cell wall remodeling. Actin patch motility is required for the movement. Early at the cell cycle, localizes at the presumed bud site of the mother cell and at the tip of the small bud. As the bud enlarges, appears as discernible spots in the medium-sized bud and these spots colocalize with actin patches. Late in the cell cycle, disappears in large budded cells, while the actin patches disperse over the cell. During cytokinesis, is concentrated in the neck, overlapping with the location of cortical actin patches.</text>
</comment>
<comment type="induction">
    <text evidence="13">During vegetative growth. Expressed periodically during the cell cycle.</text>
</comment>
<comment type="disruption phenotype">
    <text evidence="7 8 9 10 11 12 14">Cells are hypersensitive to immunosuppressant drugs FK506 and cyclosporin A (CsA) due to the inhibition of calcineurin phosphatase activity by the receptor-drug complexes and is dependent on calcineurin for vegetative growth. It confers a slow growth phenotype which is partially suppressed by exogenously added Ca(2+) and exacerbated by EGTA. Simultaneous disruption of CNA1 and CNA2 or CNB1 is lethal in FKS1-1. Disruption of FPR1 or CPR1 results in the loss of hypersensitivity. Overexpression of CNA1 or CNA2, in conjunction with CNB1, results in a significant decrease in hypersensitivity to FK506 and CsA. FKS1-8 mutant is sensitive to FK506 and cyclosporin A, has increased tendency to lyse and exhibits slow growth that is improved by the addition of osmotic stabilizing agents. It is more sensitive to the drugs when grown on galactose compared to dextrose. ETG1-1 mutant is resistant to the cell wall active echinocandins, which are inhibitors of 1,3-beta-D-glucan synthase. ETG1-4 mutant is hypersensitive to the chitin synthase inhibitor nikkomycin Z. Deletion of FKS1 leads to hypersensitivity to echinocandin-like antifungal lipopeptide caspofungin, a 1,3-beta-glucan synthase inhibitor. Deletion mutant also displays a 30% reduction in 1,3-beta-glucan and 15% reduction in alkali-insoluble 1,6-beta-glucan compared to wild-type. Increases cellular chitin level (PubMed:17142567). Increases chitin chain length (PubMed:17142567).</text>
</comment>
<comment type="similarity">
    <text evidence="19">Belongs to the glycosyltransferase 48 family.</text>
</comment>
<reference key="1">
    <citation type="journal article" date="1994" name="Gene">
        <title>The yeast FKS1 gene encodes a novel membrane protein, mutations in which confer FK506 and cyclosporin A hypersensitivity and calcineurin-dependent growth.</title>
        <authorList>
            <person name="Eng W.-K."/>
            <person name="Faucette L."/>
            <person name="McLaughlin M.M."/>
            <person name="Cafferkey R."/>
            <person name="Koltin Y."/>
            <person name="Morris R.A."/>
            <person name="Young P.R."/>
            <person name="Johnson R.K."/>
            <person name="Livi G.P."/>
        </authorList>
    </citation>
    <scope>NUCLEOTIDE SEQUENCE [GENOMIC DNA]</scope>
    <scope>TOPOLOGY</scope>
    <scope>DISRUPTION PHENOTYPE</scope>
    <source>
        <strain>RC118D</strain>
    </source>
</reference>
<reference key="2">
    <citation type="journal article" date="1994" name="Proc. Natl. Acad. Sci. U.S.A.">
        <title>The Saccharomyces cerevisiae FKS1 (ETG1) gene encodes an integral membrane protein which is a subunit of 1,3-beta-D-glucan synthase.</title>
        <authorList>
            <person name="Douglas C.M."/>
            <person name="Foor F."/>
            <person name="Marrinan J.A."/>
            <person name="Morin N."/>
            <person name="Nielsen J.B."/>
            <person name="Dahl A.M."/>
            <person name="Mazur P."/>
            <person name="Baginsky W."/>
            <person name="Li W."/>
            <person name="El-Sherbeini M."/>
            <person name="Clemas J.A."/>
            <person name="Mandala S.M."/>
            <person name="Frommer B.R."/>
            <person name="Kurtz M.B."/>
        </authorList>
    </citation>
    <scope>NUCLEOTIDE SEQUENCE [GENOMIC DNA]</scope>
    <scope>GENE NAME</scope>
    <scope>ENZYME ACTIVITY</scope>
    <scope>TOPOLOGY</scope>
    <scope>DISRUPTION PHENOTYPE</scope>
    <source>
        <strain>S288c / GRF88</strain>
    </source>
</reference>
<reference key="3">
    <citation type="journal article" date="1995" name="Eur. J. Biochem.">
        <title>Characterization and gene cloning of 1,3-beta-D-glucan synthase from Saccharomyces cerevisiae.</title>
        <authorList>
            <person name="Inoue S.B."/>
            <person name="Takewaki N."/>
            <person name="Takasuka T."/>
            <person name="Mio T."/>
            <person name="Adachi M."/>
            <person name="Fujii Y."/>
            <person name="Miyamoto C."/>
            <person name="Arisawa M."/>
            <person name="Furuichi Y."/>
            <person name="Watanabe T."/>
        </authorList>
    </citation>
    <scope>NUCLEOTIDE SEQUENCE [GENOMIC DNA]</scope>
    <scope>GENE NAME</scope>
    <source>
        <strain>ATCC 200589 / A451</strain>
    </source>
</reference>
<reference key="4">
    <citation type="journal article" date="1995" name="FEBS Lett.">
        <title>Identification of two cell cycle regulated genes affecting the beta 1,3-glucan content of cell walls in Saccharomyces cerevisiae.</title>
        <authorList>
            <person name="Ram A.F.J."/>
            <person name="Brekelmans S.S.C."/>
            <person name="Oehlen L.J.W.M."/>
            <person name="Klis F.M."/>
        </authorList>
    </citation>
    <scope>NUCLEOTIDE SEQUENCE [GENOMIC DNA]</scope>
    <scope>GENE NAME</scope>
    <source>
        <strain>S288c / GRF88</strain>
    </source>
</reference>
<reference key="5">
    <citation type="journal article" date="1995" name="J. Bacteriol.">
        <title>Papulacandin B resistance in budding and fission yeasts: isolation and characterization of a gene involved in (1,3)beta-D-glucan synthesis in Saccharomyces cerevisiae.</title>
        <authorList>
            <person name="Castro C."/>
            <person name="Ribas J.C."/>
            <person name="Valdivieso M.H."/>
            <person name="Varona R."/>
            <person name="del Rey F."/>
            <person name="Duran A."/>
        </authorList>
    </citation>
    <scope>NUCLEOTIDE SEQUENCE [GENOMIC DNA]</scope>
    <scope>GENE NAME</scope>
    <scope>ENZYME ACTIVITY</scope>
    <scope>DISRUPTION PHENOTYPE</scope>
    <source>
        <strain>S288c / GRF88</strain>
    </source>
</reference>
<reference key="6">
    <citation type="journal article" date="1995" name="Mol. Cell. Biol.">
        <title>Calcineurin, the Ca2+/calmodulin-dependent protein phosphatase, is essential in yeast mutants with cell integrity defects and in mutants that lack a functional vacuolar H(+)-ATPase.</title>
        <authorList>
            <person name="Garrett-Engele P."/>
            <person name="Moilanen B."/>
            <person name="Cyert M.S."/>
        </authorList>
    </citation>
    <scope>NUCLEOTIDE SEQUENCE [GENOMIC DNA]</scope>
    <scope>GENE NAME</scope>
    <scope>DISRUPTION PHENOTYPE</scope>
    <source>
        <strain>ATCC 204508 / S288c</strain>
    </source>
</reference>
<reference key="7">
    <citation type="journal article" date="2004" name="Antimicrob. Agents Chemother.">
        <title>FKS1 mutations responsible for selective resistance of Saccharomyces cerevisiae to the novel 1,3-beta-glucan synthase inhibitor arborcandin C.</title>
        <authorList>
            <person name="Ohyama T."/>
            <person name="Miyakoshi S."/>
            <person name="Isono F."/>
        </authorList>
    </citation>
    <scope>NUCLEOTIDE SEQUENCE [GENOMIC DNA]</scope>
    <scope>TOPOLOGY</scope>
    <scope>MUTAGENESIS OF ASN-470 AND LEU-642</scope>
    <scope>DISRUPTION PHENOTYPE</scope>
    <source>
        <strain>ATCC 96519 / YPH250</strain>
    </source>
</reference>
<reference key="8">
    <citation type="journal article" date="1997" name="Nature">
        <title>The nucleotide sequence of Saccharomyces cerevisiae chromosome XII.</title>
        <authorList>
            <person name="Johnston M."/>
            <person name="Hillier L.W."/>
            <person name="Riles L."/>
            <person name="Albermann K."/>
            <person name="Andre B."/>
            <person name="Ansorge W."/>
            <person name="Benes V."/>
            <person name="Brueckner M."/>
            <person name="Delius H."/>
            <person name="Dubois E."/>
            <person name="Duesterhoeft A."/>
            <person name="Entian K.-D."/>
            <person name="Floeth M."/>
            <person name="Goffeau A."/>
            <person name="Hebling U."/>
            <person name="Heumann K."/>
            <person name="Heuss-Neitzel D."/>
            <person name="Hilbert H."/>
            <person name="Hilger F."/>
            <person name="Kleine K."/>
            <person name="Koetter P."/>
            <person name="Louis E.J."/>
            <person name="Messenguy F."/>
            <person name="Mewes H.-W."/>
            <person name="Miosga T."/>
            <person name="Moestl D."/>
            <person name="Mueller-Auer S."/>
            <person name="Nentwich U."/>
            <person name="Obermaier B."/>
            <person name="Piravandi E."/>
            <person name="Pohl T.M."/>
            <person name="Portetelle D."/>
            <person name="Purnelle B."/>
            <person name="Rechmann S."/>
            <person name="Rieger M."/>
            <person name="Rinke M."/>
            <person name="Rose M."/>
            <person name="Scharfe M."/>
            <person name="Scherens B."/>
            <person name="Scholler P."/>
            <person name="Schwager C."/>
            <person name="Schwarz S."/>
            <person name="Underwood A.P."/>
            <person name="Urrestarazu L.A."/>
            <person name="Vandenbol M."/>
            <person name="Verhasselt P."/>
            <person name="Vierendeels F."/>
            <person name="Voet M."/>
            <person name="Volckaert G."/>
            <person name="Voss H."/>
            <person name="Wambutt R."/>
            <person name="Wedler E."/>
            <person name="Wedler H."/>
            <person name="Zimmermann F.K."/>
            <person name="Zollner A."/>
            <person name="Hani J."/>
            <person name="Hoheisel J.D."/>
        </authorList>
    </citation>
    <scope>NUCLEOTIDE SEQUENCE [LARGE SCALE GENOMIC DNA]</scope>
    <source>
        <strain>ATCC 204508 / S288c</strain>
    </source>
</reference>
<reference key="9">
    <citation type="journal article" date="2014" name="G3 (Bethesda)">
        <title>The reference genome sequence of Saccharomyces cerevisiae: Then and now.</title>
        <authorList>
            <person name="Engel S.R."/>
            <person name="Dietrich F.S."/>
            <person name="Fisk D.G."/>
            <person name="Binkley G."/>
            <person name="Balakrishnan R."/>
            <person name="Costanzo M.C."/>
            <person name="Dwight S.S."/>
            <person name="Hitz B.C."/>
            <person name="Karra K."/>
            <person name="Nash R.S."/>
            <person name="Weng S."/>
            <person name="Wong E.D."/>
            <person name="Lloyd P."/>
            <person name="Skrzypek M.S."/>
            <person name="Miyasato S.R."/>
            <person name="Simison M."/>
            <person name="Cherry J.M."/>
        </authorList>
    </citation>
    <scope>GENOME REANNOTATION</scope>
    <source>
        <strain>ATCC 204508 / S288c</strain>
    </source>
</reference>
<reference key="10">
    <citation type="journal article" date="1993" name="J. Gen. Microbiol.">
        <title>Calcineurin-dependent growth of an FK506- and CsA-hypersensitive mutant of Saccharomyces cerevisiae.</title>
        <authorList>
            <person name="Parent S.A."/>
            <person name="Nielsen J.B."/>
            <person name="Morin N."/>
            <person name="Chrebet G."/>
            <person name="Ramadan N."/>
            <person name="Dahl A.M."/>
            <person name="Hsu M.J."/>
            <person name="Bostian K.A."/>
            <person name="Foor F."/>
        </authorList>
    </citation>
    <scope>DISRUPTION PHENOTYPE</scope>
</reference>
<reference key="11">
    <citation type="journal article" date="1995" name="Mol. Cell. Biol.">
        <title>Differential expression and function of two homologous subunits of yeast 1,3-beta-D-glucan synthase.</title>
        <authorList>
            <person name="Mazur P."/>
            <person name="Morin N."/>
            <person name="Baginsky W."/>
            <person name="el-Sherbeini M."/>
            <person name="Clemas J.A."/>
            <person name="Nielsen J.B."/>
            <person name="Foor F."/>
        </authorList>
    </citation>
    <scope>INDUCTION</scope>
</reference>
<reference key="12">
    <citation type="journal article" date="1996" name="J. Biol. Chem.">
        <title>In vitro activity of 1,3-beta-D-glucan synthase requires the GTP-binding protein Rho1.</title>
        <authorList>
            <person name="Mazur P."/>
            <person name="Baginsky W."/>
        </authorList>
    </citation>
    <scope>ENZYME ACTIVITY</scope>
    <scope>INTERACTION WITH RHO1</scope>
</reference>
<reference key="13">
    <citation type="journal article" date="1996" name="Science">
        <title>Identification of yeast Rho1p GTPase as a regulatory subunit of 1,3-beta-glucan synthase.</title>
        <authorList>
            <person name="Qadota H."/>
            <person name="Python C.P."/>
            <person name="Inoue S.B."/>
            <person name="Arisawa M."/>
            <person name="Anraku Y."/>
            <person name="Zheng Y."/>
            <person name="Watanabe T."/>
            <person name="Levin D.E."/>
            <person name="Ohya Y."/>
        </authorList>
    </citation>
    <scope>INTERACTION WITH RHO1</scope>
    <scope>SUBCELLULAR LOCATION</scope>
</reference>
<reference key="14">
    <citation type="journal article" date="2002" name="Genes Cells">
        <title>Movement of yeast 1,3-beta-glucan synthase is essential for uniform cell wall synthesis.</title>
        <authorList>
            <person name="Utsugi T."/>
            <person name="Minemura M."/>
            <person name="Hirata A."/>
            <person name="Abe M."/>
            <person name="Watanabe D."/>
            <person name="Ohya Y."/>
        </authorList>
    </citation>
    <scope>FUNCTION</scope>
    <scope>SUBCELLULAR LOCATION</scope>
</reference>
<reference key="15">
    <citation type="journal article" date="2002" name="Genetics">
        <title>Dissection of upstream regulatory components of the Rho1p effector, 1,3-beta-glucan synthase, in Saccharomyces cerevisiae.</title>
        <authorList>
            <person name="Sekiya-Kawasaki M."/>
            <person name="Abe M."/>
            <person name="Saka A."/>
            <person name="Watanabe D."/>
            <person name="Kono K."/>
            <person name="Minemura-Asakawa M."/>
            <person name="Ishihara S."/>
            <person name="Watanabe T."/>
            <person name="Ohya Y."/>
        </authorList>
    </citation>
    <scope>ENZYME ACTIVITY</scope>
    <scope>MUTAGENESIS OF LYS-877; ALA-899 AND GLN-977</scope>
</reference>
<reference key="16">
    <citation type="journal article" date="2002" name="Yeast">
        <title>Mutations in Fks1p affect the cell wall content of beta-1,3- and beta-1,6-glucan in Saccharomyces cerevisiae.</title>
        <authorList>
            <person name="Dijkgraaf G.J.P."/>
            <person name="Abe M."/>
            <person name="Ohya Y."/>
            <person name="Bussey H."/>
        </authorList>
    </citation>
    <scope>ENZYME ACTIVITY</scope>
    <scope>SUBCELLULAR LOCATION</scope>
    <scope>MUTAGENESIS OF GLU-146; VAL-302; TYR-329; TYR-335; THR-605; ILE-713; ILE-722; MET-761; ALA-823; THR-828; ILE-853; LEU-855; LEU-872; LYS-877; ALA-899; GLU-907; ASP-920; ALA-932; GLU-934; GLN-977; ASN-982; PHE-1020; ILE-1047; GLU-1111; PHE-1258 AND ASN-1520</scope>
</reference>
<reference key="17">
    <citation type="journal article" date="2003" name="Proc. Natl. Acad. Sci. U.S.A.">
        <title>A subset of membrane-associated proteins is ubiquitinated in response to mutations in the endoplasmic reticulum degradation machinery.</title>
        <authorList>
            <person name="Hitchcock A.L."/>
            <person name="Auld K."/>
            <person name="Gygi S.P."/>
            <person name="Silver P.A."/>
        </authorList>
    </citation>
    <scope>UBIQUITINATION [LARGE SCALE ANALYSIS] AT LYS-910</scope>
    <scope>IDENTIFICATION BY MASS SPECTROMETRY</scope>
</reference>
<reference key="18">
    <citation type="journal article" date="2003" name="Proc. Natl. Acad. Sci. U.S.A.">
        <title>The proteome of Saccharomyces cerevisiae mitochondria.</title>
        <authorList>
            <person name="Sickmann A."/>
            <person name="Reinders J."/>
            <person name="Wagner Y."/>
            <person name="Joppich C."/>
            <person name="Zahedi R.P."/>
            <person name="Meyer H.E."/>
            <person name="Schoenfisch B."/>
            <person name="Perschil I."/>
            <person name="Chacinska A."/>
            <person name="Guiard B."/>
            <person name="Rehling P."/>
            <person name="Pfanner N."/>
            <person name="Meisinger C."/>
        </authorList>
    </citation>
    <scope>SUBCELLULAR LOCATION [LARGE SCALE ANALYSIS]</scope>
    <source>
        <strain>ATCC 76625 / YPH499</strain>
    </source>
</reference>
<reference key="19">
    <citation type="journal article" date="2004" name="Genetics">
        <title>Analysis of beta-1,3-glucan assembly in Saccharomyces cerevisiae using a synthetic interaction network and altered sensitivity to caspofungin.</title>
        <authorList>
            <person name="Lesage G."/>
            <person name="Sdicu A.-M."/>
            <person name="Menard P."/>
            <person name="Shapiro J."/>
            <person name="Hussein S."/>
            <person name="Bussey H."/>
        </authorList>
    </citation>
    <scope>CASPOFUNGIN HYPERSENSITIVITY</scope>
</reference>
<reference key="20">
    <citation type="journal article" date="2007" name="Eukaryot. Cell">
        <title>Prenylation of Saccharomyces cerevisiae Chs4p Affects Chitin Synthase III activity and chitin chain length.</title>
        <authorList>
            <person name="Grabinska K.A."/>
            <person name="Magnelli P."/>
            <person name="Robbins P.W."/>
        </authorList>
    </citation>
    <scope>DISRUPTION PHENOTYPE</scope>
</reference>
<reference key="21">
    <citation type="journal article" date="2008" name="Mol. Cell. Proteomics">
        <title>A multidimensional chromatography technology for in-depth phosphoproteome analysis.</title>
        <authorList>
            <person name="Albuquerque C.P."/>
            <person name="Smolka M.B."/>
            <person name="Payne S.H."/>
            <person name="Bafna V."/>
            <person name="Eng J."/>
            <person name="Zhou H."/>
        </authorList>
    </citation>
    <scope>IDENTIFICATION BY MASS SPECTROMETRY [LARGE SCALE ANALYSIS]</scope>
</reference>
<reference key="22">
    <citation type="journal article" date="2009" name="Science">
        <title>Global analysis of Cdk1 substrate phosphorylation sites provides insights into evolution.</title>
        <authorList>
            <person name="Holt L.J."/>
            <person name="Tuch B.B."/>
            <person name="Villen J."/>
            <person name="Johnson A.D."/>
            <person name="Gygi S.P."/>
            <person name="Morgan D.O."/>
        </authorList>
    </citation>
    <scope>PHOSPHORYLATION [LARGE SCALE ANALYSIS] AT THR-269 AND THR-272</scope>
    <scope>IDENTIFICATION BY MASS SPECTROMETRY [LARGE SCALE ANALYSIS]</scope>
</reference>
<reference key="23">
    <citation type="journal article" date="2012" name="Proteomics">
        <title>Sites of ubiquitin attachment in Saccharomyces cerevisiae.</title>
        <authorList>
            <person name="Starita L.M."/>
            <person name="Lo R.S."/>
            <person name="Eng J.K."/>
            <person name="von Haller P.D."/>
            <person name="Fields S."/>
        </authorList>
    </citation>
    <scope>UBIQUITINATION [LARGE SCALE ANALYSIS] AT LYS-259; LYS-275; LYS-386; LYS-910; LYS-915; LYS-1539 AND LYS-1547</scope>
    <scope>IDENTIFICATION BY MASS SPECTROMETRY [LARGE SCALE ANALYSIS]</scope>
</reference>